<reference key="1">
    <citation type="journal article" date="2007" name="Proc. Natl. Acad. Sci. U.S.A.">
        <title>Genomic and metabolic adaptations of Methanobrevibacter smithii to the human gut.</title>
        <authorList>
            <person name="Samuel B.S."/>
            <person name="Hansen E.E."/>
            <person name="Manchester J.K."/>
            <person name="Coutinho P.M."/>
            <person name="Henrissat B."/>
            <person name="Fulton R."/>
            <person name="Latreille P."/>
            <person name="Kim K."/>
            <person name="Wilson R.K."/>
            <person name="Gordon J.I."/>
        </authorList>
    </citation>
    <scope>NUCLEOTIDE SEQUENCE [LARGE SCALE GENOMIC DNA]</scope>
    <source>
        <strain>ATCC 35061 / DSM 861 / OCM 144 / PS</strain>
    </source>
</reference>
<organism>
    <name type="scientific">Methanobrevibacter smithii (strain ATCC 35061 / DSM 861 / OCM 144 / PS)</name>
    <dbReference type="NCBI Taxonomy" id="420247"/>
    <lineage>
        <taxon>Archaea</taxon>
        <taxon>Methanobacteriati</taxon>
        <taxon>Methanobacteriota</taxon>
        <taxon>Methanomada group</taxon>
        <taxon>Methanobacteria</taxon>
        <taxon>Methanobacteriales</taxon>
        <taxon>Methanobacteriaceae</taxon>
        <taxon>Methanobrevibacter</taxon>
    </lineage>
</organism>
<keyword id="KW-0028">Amino-acid biosynthesis</keyword>
<keyword id="KW-0057">Aromatic amino acid biosynthesis</keyword>
<keyword id="KW-0963">Cytoplasm</keyword>
<keyword id="KW-0808">Transferase</keyword>
<dbReference type="EC" id="2.5.1.19" evidence="1"/>
<dbReference type="EMBL" id="CP000678">
    <property type="protein sequence ID" value="ABQ86478.1"/>
    <property type="molecule type" value="Genomic_DNA"/>
</dbReference>
<dbReference type="RefSeq" id="WP_011953797.1">
    <property type="nucleotide sequence ID" value="NZ_CP117965.1"/>
</dbReference>
<dbReference type="SMR" id="A5UJV0"/>
<dbReference type="STRING" id="420247.Msm_0273"/>
<dbReference type="EnsemblBacteria" id="ABQ86478">
    <property type="protein sequence ID" value="ABQ86478"/>
    <property type="gene ID" value="Msm_0273"/>
</dbReference>
<dbReference type="GeneID" id="78816897"/>
<dbReference type="KEGG" id="msi:Msm_0273"/>
<dbReference type="PATRIC" id="fig|420247.28.peg.276"/>
<dbReference type="eggNOG" id="arCOG04134">
    <property type="taxonomic scope" value="Archaea"/>
</dbReference>
<dbReference type="HOGENOM" id="CLU_024321_0_0_2"/>
<dbReference type="UniPathway" id="UPA00053"/>
<dbReference type="Proteomes" id="UP000001992">
    <property type="component" value="Chromosome"/>
</dbReference>
<dbReference type="GO" id="GO:0005737">
    <property type="term" value="C:cytoplasm"/>
    <property type="evidence" value="ECO:0007669"/>
    <property type="project" value="UniProtKB-SubCell"/>
</dbReference>
<dbReference type="GO" id="GO:0003866">
    <property type="term" value="F:3-phosphoshikimate 1-carboxyvinyltransferase activity"/>
    <property type="evidence" value="ECO:0007669"/>
    <property type="project" value="UniProtKB-UniRule"/>
</dbReference>
<dbReference type="GO" id="GO:0008652">
    <property type="term" value="P:amino acid biosynthetic process"/>
    <property type="evidence" value="ECO:0007669"/>
    <property type="project" value="UniProtKB-KW"/>
</dbReference>
<dbReference type="GO" id="GO:0009073">
    <property type="term" value="P:aromatic amino acid family biosynthetic process"/>
    <property type="evidence" value="ECO:0007669"/>
    <property type="project" value="UniProtKB-KW"/>
</dbReference>
<dbReference type="GO" id="GO:0009423">
    <property type="term" value="P:chorismate biosynthetic process"/>
    <property type="evidence" value="ECO:0007669"/>
    <property type="project" value="UniProtKB-UniRule"/>
</dbReference>
<dbReference type="CDD" id="cd01556">
    <property type="entry name" value="EPSP_synthase"/>
    <property type="match status" value="1"/>
</dbReference>
<dbReference type="Gene3D" id="3.65.10.10">
    <property type="entry name" value="Enolpyruvate transferase domain"/>
    <property type="match status" value="2"/>
</dbReference>
<dbReference type="HAMAP" id="MF_00210">
    <property type="entry name" value="EPSP_synth"/>
    <property type="match status" value="1"/>
</dbReference>
<dbReference type="InterPro" id="IPR001986">
    <property type="entry name" value="Enolpyruvate_Tfrase_dom"/>
</dbReference>
<dbReference type="InterPro" id="IPR036968">
    <property type="entry name" value="Enolpyruvate_Tfrase_sf"/>
</dbReference>
<dbReference type="InterPro" id="IPR006264">
    <property type="entry name" value="EPSP_synthase"/>
</dbReference>
<dbReference type="InterPro" id="IPR023193">
    <property type="entry name" value="EPSP_synthase_CS"/>
</dbReference>
<dbReference type="InterPro" id="IPR013792">
    <property type="entry name" value="RNA3'P_cycl/enolpyr_Trfase_a/b"/>
</dbReference>
<dbReference type="NCBIfam" id="TIGR01356">
    <property type="entry name" value="aroA"/>
    <property type="match status" value="1"/>
</dbReference>
<dbReference type="PANTHER" id="PTHR21090">
    <property type="entry name" value="AROM/DEHYDROQUINATE SYNTHASE"/>
    <property type="match status" value="1"/>
</dbReference>
<dbReference type="PANTHER" id="PTHR21090:SF5">
    <property type="entry name" value="PENTAFUNCTIONAL AROM POLYPEPTIDE"/>
    <property type="match status" value="1"/>
</dbReference>
<dbReference type="Pfam" id="PF00275">
    <property type="entry name" value="EPSP_synthase"/>
    <property type="match status" value="1"/>
</dbReference>
<dbReference type="PIRSF" id="PIRSF000505">
    <property type="entry name" value="EPSPS"/>
    <property type="match status" value="1"/>
</dbReference>
<dbReference type="SUPFAM" id="SSF55205">
    <property type="entry name" value="EPT/RTPC-like"/>
    <property type="match status" value="1"/>
</dbReference>
<dbReference type="PROSITE" id="PS00104">
    <property type="entry name" value="EPSP_SYNTHASE_1"/>
    <property type="match status" value="1"/>
</dbReference>
<dbReference type="PROSITE" id="PS00885">
    <property type="entry name" value="EPSP_SYNTHASE_2"/>
    <property type="match status" value="1"/>
</dbReference>
<comment type="function">
    <text evidence="1">Catalyzes the transfer of the enolpyruvyl moiety of phosphoenolpyruvate (PEP) to the 5-hydroxyl of shikimate-3-phosphate (S3P) to produce enolpyruvyl shikimate-3-phosphate and inorganic phosphate.</text>
</comment>
<comment type="catalytic activity">
    <reaction evidence="1">
        <text>3-phosphoshikimate + phosphoenolpyruvate = 5-O-(1-carboxyvinyl)-3-phosphoshikimate + phosphate</text>
        <dbReference type="Rhea" id="RHEA:21256"/>
        <dbReference type="ChEBI" id="CHEBI:43474"/>
        <dbReference type="ChEBI" id="CHEBI:57701"/>
        <dbReference type="ChEBI" id="CHEBI:58702"/>
        <dbReference type="ChEBI" id="CHEBI:145989"/>
        <dbReference type="EC" id="2.5.1.19"/>
    </reaction>
    <physiologicalReaction direction="left-to-right" evidence="1">
        <dbReference type="Rhea" id="RHEA:21257"/>
    </physiologicalReaction>
</comment>
<comment type="pathway">
    <text evidence="1">Metabolic intermediate biosynthesis; chorismate biosynthesis.</text>
</comment>
<comment type="subunit">
    <text evidence="1">Monomer.</text>
</comment>
<comment type="subcellular location">
    <subcellularLocation>
        <location evidence="1">Cytoplasm</location>
    </subcellularLocation>
</comment>
<comment type="similarity">
    <text evidence="1">Belongs to the EPSP synthase family.</text>
</comment>
<accession>A5UJV0</accession>
<proteinExistence type="inferred from homology"/>
<sequence length="438" mass="47383">MNLKVKTISNIGGEVKAPPSKSYSHRAVILASLADGTSKIHDMLFSQDVLSSINVCRALGANITKKDDYLEVIGTNGKLHNSSEVPIDLGNSGTTLRLMTSIASLADNEVILTGDDSLQTRPMEILTESLASLGVCAASINGNGKAPILIKPGYVGGETNILGNVSSQFISSILISAPLSENGVDLFVLPEFKSRPYVNMTCDIMAKFGVKIENEFFVRHDDCDRESKNCRIDEFKISKQEYKSCDYVVEGDYSSASYLLAAVAIYGGNAKILNLFKDSKQGDKLILNILKKMGAKIEIFDDYVEISSEGNLKGIDVDLSNAPDLLITVAILAALADGTTNITGVKHARVKETDRIATTCSELKKLGCKLKEFEDGMSIEGGIRSGVVDSHKDHRLAMAFSLVGLKHDIEIKNGEVFDVSFPNFIEAMSEIGVELELI</sequence>
<gene>
    <name evidence="1" type="primary">aroA</name>
    <name type="ordered locus">Msm_0273</name>
</gene>
<protein>
    <recommendedName>
        <fullName evidence="1">3-phosphoshikimate 1-carboxyvinyltransferase</fullName>
        <ecNumber evidence="1">2.5.1.19</ecNumber>
    </recommendedName>
    <alternativeName>
        <fullName evidence="1">5-enolpyruvylshikimate-3-phosphate synthase</fullName>
        <shortName evidence="1">EPSP synthase</shortName>
        <shortName evidence="1">EPSPS</shortName>
    </alternativeName>
</protein>
<evidence type="ECO:0000255" key="1">
    <source>
        <dbReference type="HAMAP-Rule" id="MF_00210"/>
    </source>
</evidence>
<feature type="chain" id="PRO_0000325401" description="3-phosphoshikimate 1-carboxyvinyltransferase">
    <location>
        <begin position="1"/>
        <end position="438"/>
    </location>
</feature>
<feature type="active site" description="Proton acceptor" evidence="1">
    <location>
        <position position="324"/>
    </location>
</feature>
<feature type="binding site" evidence="1">
    <location>
        <position position="21"/>
    </location>
    <ligand>
        <name>3-phosphoshikimate</name>
        <dbReference type="ChEBI" id="CHEBI:145989"/>
    </ligand>
</feature>
<feature type="binding site" evidence="1">
    <location>
        <position position="21"/>
    </location>
    <ligand>
        <name>phosphoenolpyruvate</name>
        <dbReference type="ChEBI" id="CHEBI:58702"/>
    </ligand>
</feature>
<feature type="binding site" evidence="1">
    <location>
        <position position="22"/>
    </location>
    <ligand>
        <name>3-phosphoshikimate</name>
        <dbReference type="ChEBI" id="CHEBI:145989"/>
    </ligand>
</feature>
<feature type="binding site" evidence="1">
    <location>
        <position position="26"/>
    </location>
    <ligand>
        <name>3-phosphoshikimate</name>
        <dbReference type="ChEBI" id="CHEBI:145989"/>
    </ligand>
</feature>
<feature type="binding site" evidence="1">
    <location>
        <position position="93"/>
    </location>
    <ligand>
        <name>phosphoenolpyruvate</name>
        <dbReference type="ChEBI" id="CHEBI:58702"/>
    </ligand>
</feature>
<feature type="binding site" evidence="1">
    <location>
        <position position="121"/>
    </location>
    <ligand>
        <name>phosphoenolpyruvate</name>
        <dbReference type="ChEBI" id="CHEBI:58702"/>
    </ligand>
</feature>
<feature type="binding site" evidence="1">
    <location>
        <position position="166"/>
    </location>
    <ligand>
        <name>3-phosphoshikimate</name>
        <dbReference type="ChEBI" id="CHEBI:145989"/>
    </ligand>
</feature>
<feature type="binding site" evidence="1">
    <location>
        <position position="167"/>
    </location>
    <ligand>
        <name>3-phosphoshikimate</name>
        <dbReference type="ChEBI" id="CHEBI:145989"/>
    </ligand>
</feature>
<feature type="binding site" evidence="1">
    <location>
        <position position="168"/>
    </location>
    <ligand>
        <name>3-phosphoshikimate</name>
        <dbReference type="ChEBI" id="CHEBI:145989"/>
    </ligand>
</feature>
<feature type="binding site" evidence="1">
    <location>
        <position position="168"/>
    </location>
    <ligand>
        <name>phosphoenolpyruvate</name>
        <dbReference type="ChEBI" id="CHEBI:58702"/>
    </ligand>
</feature>
<feature type="binding site" evidence="1">
    <location>
        <position position="194"/>
    </location>
    <ligand>
        <name>3-phosphoshikimate</name>
        <dbReference type="ChEBI" id="CHEBI:145989"/>
    </ligand>
</feature>
<feature type="binding site" evidence="1">
    <location>
        <position position="324"/>
    </location>
    <ligand>
        <name>3-phosphoshikimate</name>
        <dbReference type="ChEBI" id="CHEBI:145989"/>
    </ligand>
</feature>
<feature type="binding site" evidence="1">
    <location>
        <position position="351"/>
    </location>
    <ligand>
        <name>3-phosphoshikimate</name>
        <dbReference type="ChEBI" id="CHEBI:145989"/>
    </ligand>
</feature>
<feature type="binding site" evidence="1">
    <location>
        <position position="355"/>
    </location>
    <ligand>
        <name>phosphoenolpyruvate</name>
        <dbReference type="ChEBI" id="CHEBI:58702"/>
    </ligand>
</feature>
<feature type="binding site" evidence="1">
    <location>
        <position position="395"/>
    </location>
    <ligand>
        <name>phosphoenolpyruvate</name>
        <dbReference type="ChEBI" id="CHEBI:58702"/>
    </ligand>
</feature>
<name>AROA_METS3</name>